<name>MAUL_METEA</name>
<keyword id="KW-1185">Reference proteome</keyword>
<proteinExistence type="predicted"/>
<organism>
    <name type="scientific">Methylorubrum extorquens (strain ATCC 14718 / DSM 1338 / JCM 2805 / NCIMB 9133 / AM1)</name>
    <name type="common">Methylobacterium extorquens</name>
    <dbReference type="NCBI Taxonomy" id="272630"/>
    <lineage>
        <taxon>Bacteria</taxon>
        <taxon>Pseudomonadati</taxon>
        <taxon>Pseudomonadota</taxon>
        <taxon>Alphaproteobacteria</taxon>
        <taxon>Hyphomicrobiales</taxon>
        <taxon>Methylobacteriaceae</taxon>
        <taxon>Methylorubrum</taxon>
    </lineage>
</organism>
<protein>
    <recommendedName>
        <fullName>Methylamine utilization protein MauL</fullName>
    </recommendedName>
</protein>
<reference key="1">
    <citation type="journal article" date="1994" name="J. Bacteriol.">
        <title>Genetic organization of the mau gene cluster in Methylobacterium extorquens AM1: complete nucleotide sequence and generation and characteristics of mau mutants.</title>
        <authorList>
            <person name="Chistoserdov A.Y."/>
            <person name="Chistoserdova L.V."/>
            <person name="McIntire W.S."/>
            <person name="Lidstrom M.E."/>
        </authorList>
    </citation>
    <scope>NUCLEOTIDE SEQUENCE [GENOMIC DNA]</scope>
</reference>
<reference key="2">
    <citation type="journal article" date="2009" name="PLoS ONE">
        <title>Methylobacterium genome sequences: a reference blueprint to investigate microbial metabolism of C1 compounds from natural and industrial sources.</title>
        <authorList>
            <person name="Vuilleumier S."/>
            <person name="Chistoserdova L."/>
            <person name="Lee M.-C."/>
            <person name="Bringel F."/>
            <person name="Lajus A."/>
            <person name="Zhou Y."/>
            <person name="Gourion B."/>
            <person name="Barbe V."/>
            <person name="Chang J."/>
            <person name="Cruveiller S."/>
            <person name="Dossat C."/>
            <person name="Gillett W."/>
            <person name="Gruffaz C."/>
            <person name="Haugen E."/>
            <person name="Hourcade E."/>
            <person name="Levy R."/>
            <person name="Mangenot S."/>
            <person name="Muller E."/>
            <person name="Nadalig T."/>
            <person name="Pagni M."/>
            <person name="Penny C."/>
            <person name="Peyraud R."/>
            <person name="Robinson D.G."/>
            <person name="Roche D."/>
            <person name="Rouy Z."/>
            <person name="Saenampechek C."/>
            <person name="Salvignol G."/>
            <person name="Vallenet D."/>
            <person name="Wu Z."/>
            <person name="Marx C.J."/>
            <person name="Vorholt J.A."/>
            <person name="Olson M.V."/>
            <person name="Kaul R."/>
            <person name="Weissenbach J."/>
            <person name="Medigue C."/>
            <person name="Lidstrom M.E."/>
        </authorList>
    </citation>
    <scope>NUCLEOTIDE SEQUENCE [LARGE SCALE GENOMIC DNA]</scope>
    <source>
        <strain>ATCC 14718 / DSM 1338 / JCM 2805 / NCIMB 9133 / AM1</strain>
    </source>
</reference>
<feature type="chain" id="PRO_0000208945" description="Methylamine utilization protein MauL">
    <location>
        <begin position="1"/>
        <end position="114"/>
    </location>
</feature>
<comment type="function">
    <text>Probably involved in TTQ prosthetic group biosynthesis.</text>
</comment>
<comment type="pathway">
    <text>One-carbon metabolism; methylamine degradation.</text>
</comment>
<gene>
    <name type="primary">mauL</name>
    <name type="ordered locus">MexAM1_META1p2777</name>
</gene>
<dbReference type="EMBL" id="L26406">
    <property type="protein sequence ID" value="AAB46940.1"/>
    <property type="molecule type" value="Genomic_DNA"/>
</dbReference>
<dbReference type="EMBL" id="CP001510">
    <property type="protein sequence ID" value="ACS40535.1"/>
    <property type="molecule type" value="Genomic_DNA"/>
</dbReference>
<dbReference type="RefSeq" id="WP_012753050.1">
    <property type="nucleotide sequence ID" value="NC_012808.1"/>
</dbReference>
<dbReference type="SMR" id="Q49129"/>
<dbReference type="STRING" id="272630.MexAM1_META1p2777"/>
<dbReference type="KEGG" id="mea:Mex_1p2777"/>
<dbReference type="eggNOG" id="ENOG503492U">
    <property type="taxonomic scope" value="Bacteria"/>
</dbReference>
<dbReference type="HOGENOM" id="CLU_2046456_0_0_5"/>
<dbReference type="OrthoDB" id="7306926at2"/>
<dbReference type="UniPathway" id="UPA00895"/>
<dbReference type="Proteomes" id="UP000009081">
    <property type="component" value="Chromosome"/>
</dbReference>
<dbReference type="CDD" id="cd04221">
    <property type="entry name" value="MauL"/>
    <property type="match status" value="1"/>
</dbReference>
<dbReference type="Gene3D" id="2.60.40.420">
    <property type="entry name" value="Cupredoxins - blue copper proteins"/>
    <property type="match status" value="1"/>
</dbReference>
<dbReference type="InterPro" id="IPR008972">
    <property type="entry name" value="Cupredoxin"/>
</dbReference>
<dbReference type="InterPro" id="IPR034242">
    <property type="entry name" value="MauL"/>
</dbReference>
<dbReference type="SUPFAM" id="SSF49503">
    <property type="entry name" value="Cupredoxins"/>
    <property type="match status" value="1"/>
</dbReference>
<accession>Q49129</accession>
<accession>C5ATL1</accession>
<sequence length="114" mass="12771">MVMQTMLRVLTVSLAFALTSYALPAAADEFEVTIHHVELQDPGLKAKVGDAISFVNHADISHNLYLTYEDGQVETLDTQPPRTTKRTVLKRAGHVVVRCWIHPIIRMEFDVAAK</sequence>